<organism>
    <name type="scientific">Pasteurella multocida (strain Pm70)</name>
    <dbReference type="NCBI Taxonomy" id="272843"/>
    <lineage>
        <taxon>Bacteria</taxon>
        <taxon>Pseudomonadati</taxon>
        <taxon>Pseudomonadota</taxon>
        <taxon>Gammaproteobacteria</taxon>
        <taxon>Pasteurellales</taxon>
        <taxon>Pasteurellaceae</taxon>
        <taxon>Pasteurella</taxon>
    </lineage>
</organism>
<sequence length="538" mass="58880">MTDLNKVINELGALGIHDVKEIVYNPSYEQLFEEETKPGLEGYEKGIVTQSGAVAVDTGIFTGRSPKDKYIVLDDKTKDTVWWTSDAAKNDNKPMTQDTWKSLKGLVTEQLSGKRLFVIDAFCGANADTRLSVRIVTEVAWQAHFVKNMFIRPTEAELVGFKPDFVVMNGSKVTNPNWKEQGLNSENFVAFNLTEGVQLIGGTWYGGEMKKGMFSMMNYFLPLKGIASMHCSANVGEKGDVAVFFGLSGTGKTTLSTDPKRQLIGDDEHGWDDDGVFNYEGGCYAKTIKLSPENEPDIYKAIKRDALLENVVVRADGSVDYDDGSKTENTRVSYPIYHIDNIVTPVSKAGHAKKVIFLTADAFGVLPPVSKLTPEQTKYYFLSGFTAKLAGTERGITEPTPTFSACFGAAFLSLHPTQYAEVLVKRMEAAGAEAYLVNTGWNGTGKRISIKDTRGIIDAILDGSIEKAEMGKLPIFDLAIPTALPGVDPAILDPRDTYADKAQWQAKAEDLAGRFVKNFEKYTTNDEGKALVAAGPKA</sequence>
<evidence type="ECO:0000255" key="1">
    <source>
        <dbReference type="HAMAP-Rule" id="MF_00453"/>
    </source>
</evidence>
<protein>
    <recommendedName>
        <fullName evidence="1">Phosphoenolpyruvate carboxykinase (ATP)</fullName>
        <shortName evidence="1">PCK</shortName>
        <shortName evidence="1">PEP carboxykinase</shortName>
        <shortName evidence="1">PEPCK</shortName>
        <ecNumber evidence="1">4.1.1.49</ecNumber>
    </recommendedName>
</protein>
<reference key="1">
    <citation type="journal article" date="2001" name="Proc. Natl. Acad. Sci. U.S.A.">
        <title>Complete genomic sequence of Pasteurella multocida Pm70.</title>
        <authorList>
            <person name="May B.J."/>
            <person name="Zhang Q."/>
            <person name="Li L.L."/>
            <person name="Paustian M.L."/>
            <person name="Whittam T.S."/>
            <person name="Kapur V."/>
        </authorList>
    </citation>
    <scope>NUCLEOTIDE SEQUENCE [LARGE SCALE GENOMIC DNA]</scope>
    <source>
        <strain>Pm70</strain>
    </source>
</reference>
<proteinExistence type="inferred from homology"/>
<feature type="chain" id="PRO_0000203829" description="Phosphoenolpyruvate carboxykinase (ATP)">
    <location>
        <begin position="1"/>
        <end position="538"/>
    </location>
</feature>
<feature type="binding site" evidence="1">
    <location>
        <position position="64"/>
    </location>
    <ligand>
        <name>substrate</name>
    </ligand>
</feature>
<feature type="binding site" evidence="1">
    <location>
        <position position="205"/>
    </location>
    <ligand>
        <name>substrate</name>
    </ligand>
</feature>
<feature type="binding site" evidence="1">
    <location>
        <position position="211"/>
    </location>
    <ligand>
        <name>ATP</name>
        <dbReference type="ChEBI" id="CHEBI:30616"/>
    </ligand>
</feature>
<feature type="binding site" evidence="1">
    <location>
        <position position="211"/>
    </location>
    <ligand>
        <name>Mn(2+)</name>
        <dbReference type="ChEBI" id="CHEBI:29035"/>
    </ligand>
</feature>
<feature type="binding site" evidence="1">
    <location>
        <position position="211"/>
    </location>
    <ligand>
        <name>substrate</name>
    </ligand>
</feature>
<feature type="binding site" evidence="1">
    <location>
        <position position="230"/>
    </location>
    <ligand>
        <name>ATP</name>
        <dbReference type="ChEBI" id="CHEBI:30616"/>
    </ligand>
</feature>
<feature type="binding site" evidence="1">
    <location>
        <position position="230"/>
    </location>
    <ligand>
        <name>Mn(2+)</name>
        <dbReference type="ChEBI" id="CHEBI:29035"/>
    </ligand>
</feature>
<feature type="binding site" evidence="1">
    <location>
        <begin position="246"/>
        <end position="254"/>
    </location>
    <ligand>
        <name>ATP</name>
        <dbReference type="ChEBI" id="CHEBI:30616"/>
    </ligand>
</feature>
<feature type="binding site" evidence="1">
    <location>
        <position position="267"/>
    </location>
    <ligand>
        <name>Mn(2+)</name>
        <dbReference type="ChEBI" id="CHEBI:29035"/>
    </ligand>
</feature>
<feature type="binding site" evidence="1">
    <location>
        <position position="295"/>
    </location>
    <ligand>
        <name>ATP</name>
        <dbReference type="ChEBI" id="CHEBI:30616"/>
    </ligand>
</feature>
<feature type="binding site" evidence="1">
    <location>
        <position position="331"/>
    </location>
    <ligand>
        <name>ATP</name>
        <dbReference type="ChEBI" id="CHEBI:30616"/>
    </ligand>
</feature>
<feature type="binding site" evidence="1">
    <location>
        <position position="331"/>
    </location>
    <ligand>
        <name>substrate</name>
    </ligand>
</feature>
<feature type="binding site" evidence="1">
    <location>
        <begin position="447"/>
        <end position="448"/>
    </location>
    <ligand>
        <name>ATP</name>
        <dbReference type="ChEBI" id="CHEBI:30616"/>
    </ligand>
</feature>
<feature type="binding site" evidence="1">
    <location>
        <position position="453"/>
    </location>
    <ligand>
        <name>ATP</name>
        <dbReference type="ChEBI" id="CHEBI:30616"/>
    </ligand>
</feature>
<accession>Q9CKR4</accession>
<comment type="function">
    <text evidence="1">Involved in the gluconeogenesis. Catalyzes the conversion of oxaloacetate (OAA) to phosphoenolpyruvate (PEP) through direct phosphoryl transfer between the nucleoside triphosphate and OAA.</text>
</comment>
<comment type="catalytic activity">
    <reaction evidence="1">
        <text>oxaloacetate + ATP = phosphoenolpyruvate + ADP + CO2</text>
        <dbReference type="Rhea" id="RHEA:18617"/>
        <dbReference type="ChEBI" id="CHEBI:16452"/>
        <dbReference type="ChEBI" id="CHEBI:16526"/>
        <dbReference type="ChEBI" id="CHEBI:30616"/>
        <dbReference type="ChEBI" id="CHEBI:58702"/>
        <dbReference type="ChEBI" id="CHEBI:456216"/>
        <dbReference type="EC" id="4.1.1.49"/>
    </reaction>
</comment>
<comment type="cofactor">
    <cofactor evidence="1">
        <name>Mn(2+)</name>
        <dbReference type="ChEBI" id="CHEBI:29035"/>
    </cofactor>
    <text evidence="1">Binds 1 Mn(2+) ion per subunit.</text>
</comment>
<comment type="pathway">
    <text evidence="1">Carbohydrate biosynthesis; gluconeogenesis.</text>
</comment>
<comment type="subunit">
    <text evidence="1">Monomer.</text>
</comment>
<comment type="subcellular location">
    <subcellularLocation>
        <location evidence="1">Cytoplasm</location>
    </subcellularLocation>
</comment>
<comment type="similarity">
    <text evidence="1">Belongs to the phosphoenolpyruvate carboxykinase (ATP) family.</text>
</comment>
<dbReference type="EC" id="4.1.1.49" evidence="1"/>
<dbReference type="EMBL" id="AE004439">
    <property type="protein sequence ID" value="AAK03626.1"/>
    <property type="molecule type" value="Genomic_DNA"/>
</dbReference>
<dbReference type="RefSeq" id="WP_010907218.1">
    <property type="nucleotide sequence ID" value="NC_002663.1"/>
</dbReference>
<dbReference type="SMR" id="Q9CKR4"/>
<dbReference type="STRING" id="272843.PM1542"/>
<dbReference type="EnsemblBacteria" id="AAK03626">
    <property type="protein sequence ID" value="AAK03626"/>
    <property type="gene ID" value="PM1542"/>
</dbReference>
<dbReference type="KEGG" id="pmu:PM1542"/>
<dbReference type="PATRIC" id="fig|272843.6.peg.1559"/>
<dbReference type="HOGENOM" id="CLU_018247_0_1_6"/>
<dbReference type="OrthoDB" id="9806325at2"/>
<dbReference type="UniPathway" id="UPA00138"/>
<dbReference type="Proteomes" id="UP000000809">
    <property type="component" value="Chromosome"/>
</dbReference>
<dbReference type="GO" id="GO:0005829">
    <property type="term" value="C:cytosol"/>
    <property type="evidence" value="ECO:0007669"/>
    <property type="project" value="TreeGrafter"/>
</dbReference>
<dbReference type="GO" id="GO:0005524">
    <property type="term" value="F:ATP binding"/>
    <property type="evidence" value="ECO:0007669"/>
    <property type="project" value="UniProtKB-UniRule"/>
</dbReference>
<dbReference type="GO" id="GO:0046872">
    <property type="term" value="F:metal ion binding"/>
    <property type="evidence" value="ECO:0007669"/>
    <property type="project" value="UniProtKB-KW"/>
</dbReference>
<dbReference type="GO" id="GO:0004612">
    <property type="term" value="F:phosphoenolpyruvate carboxykinase (ATP) activity"/>
    <property type="evidence" value="ECO:0007669"/>
    <property type="project" value="UniProtKB-UniRule"/>
</dbReference>
<dbReference type="GO" id="GO:0006094">
    <property type="term" value="P:gluconeogenesis"/>
    <property type="evidence" value="ECO:0007669"/>
    <property type="project" value="UniProtKB-UniRule"/>
</dbReference>
<dbReference type="CDD" id="cd00484">
    <property type="entry name" value="PEPCK_ATP"/>
    <property type="match status" value="1"/>
</dbReference>
<dbReference type="FunFam" id="2.170.8.10:FF:000001">
    <property type="entry name" value="Phosphoenolpyruvate carboxykinase (ATP)"/>
    <property type="match status" value="1"/>
</dbReference>
<dbReference type="FunFam" id="3.40.449.10:FF:000001">
    <property type="entry name" value="Phosphoenolpyruvate carboxykinase (ATP)"/>
    <property type="match status" value="1"/>
</dbReference>
<dbReference type="Gene3D" id="3.90.228.20">
    <property type="match status" value="1"/>
</dbReference>
<dbReference type="Gene3D" id="3.40.449.10">
    <property type="entry name" value="Phosphoenolpyruvate Carboxykinase, domain 1"/>
    <property type="match status" value="1"/>
</dbReference>
<dbReference type="Gene3D" id="2.170.8.10">
    <property type="entry name" value="Phosphoenolpyruvate Carboxykinase, domain 2"/>
    <property type="match status" value="1"/>
</dbReference>
<dbReference type="HAMAP" id="MF_00453">
    <property type="entry name" value="PEPCK_ATP"/>
    <property type="match status" value="1"/>
</dbReference>
<dbReference type="InterPro" id="IPR001272">
    <property type="entry name" value="PEP_carboxykinase_ATP"/>
</dbReference>
<dbReference type="InterPro" id="IPR013035">
    <property type="entry name" value="PEP_carboxykinase_C"/>
</dbReference>
<dbReference type="InterPro" id="IPR008210">
    <property type="entry name" value="PEP_carboxykinase_N"/>
</dbReference>
<dbReference type="InterPro" id="IPR015994">
    <property type="entry name" value="PEPCK_ATP_CS"/>
</dbReference>
<dbReference type="NCBIfam" id="TIGR00224">
    <property type="entry name" value="pckA"/>
    <property type="match status" value="1"/>
</dbReference>
<dbReference type="NCBIfam" id="NF006819">
    <property type="entry name" value="PRK09344.1-1"/>
    <property type="match status" value="1"/>
</dbReference>
<dbReference type="NCBIfam" id="NF006820">
    <property type="entry name" value="PRK09344.1-2"/>
    <property type="match status" value="1"/>
</dbReference>
<dbReference type="NCBIfam" id="NF006821">
    <property type="entry name" value="PRK09344.1-3"/>
    <property type="match status" value="1"/>
</dbReference>
<dbReference type="PANTHER" id="PTHR30031:SF0">
    <property type="entry name" value="PHOSPHOENOLPYRUVATE CARBOXYKINASE (ATP)"/>
    <property type="match status" value="1"/>
</dbReference>
<dbReference type="PANTHER" id="PTHR30031">
    <property type="entry name" value="PHOSPHOENOLPYRUVATE CARBOXYKINASE ATP"/>
    <property type="match status" value="1"/>
</dbReference>
<dbReference type="Pfam" id="PF01293">
    <property type="entry name" value="PEPCK_ATP"/>
    <property type="match status" value="1"/>
</dbReference>
<dbReference type="PIRSF" id="PIRSF006294">
    <property type="entry name" value="PEP_crbxkin"/>
    <property type="match status" value="1"/>
</dbReference>
<dbReference type="SUPFAM" id="SSF68923">
    <property type="entry name" value="PEP carboxykinase N-terminal domain"/>
    <property type="match status" value="1"/>
</dbReference>
<dbReference type="SUPFAM" id="SSF53795">
    <property type="entry name" value="PEP carboxykinase-like"/>
    <property type="match status" value="1"/>
</dbReference>
<dbReference type="PROSITE" id="PS00532">
    <property type="entry name" value="PEPCK_ATP"/>
    <property type="match status" value="1"/>
</dbReference>
<gene>
    <name evidence="1" type="primary">pckA</name>
    <name type="ordered locus">PM1542</name>
</gene>
<keyword id="KW-0067">ATP-binding</keyword>
<keyword id="KW-0963">Cytoplasm</keyword>
<keyword id="KW-0210">Decarboxylase</keyword>
<keyword id="KW-0312">Gluconeogenesis</keyword>
<keyword id="KW-0456">Lyase</keyword>
<keyword id="KW-0464">Manganese</keyword>
<keyword id="KW-0479">Metal-binding</keyword>
<keyword id="KW-0547">Nucleotide-binding</keyword>
<keyword id="KW-1185">Reference proteome</keyword>
<name>PCKA_PASMU</name>